<sequence length="336" mass="36879">MAAKSRSPKRGTSEKTPLVEKEAPYQPPTKGILSKLPASWVPYAQLIRLEQPHGNYMIYFPHIIGLMYASAIRPTELSVLGHRAAIFAIWTFLMRGAGCAWNDNVDQDFDRKTERCRHRPIARGAISTTQGHVFTLILTLLGFAAIQSLPIECTYVGVGTTVLSAIYPFGKRFTHFAQVILGSTLASTIALSAYSVGLPALSKDYFVPTLCLSATIMLLVVFYDVVYARADTTDDLKSGVKGMAVRFRNHLEGLFAFITLSIAGSLTTLGYLVGMGHWFYLFSVGGLTFGLVSMVALTHWNILPGYSSGRCYAFAILNLLTGFIMEYATKDYVVGV</sequence>
<feature type="chain" id="PRO_0000448998" description="Prenytransferase ascA">
    <location>
        <begin position="1"/>
        <end position="336"/>
    </location>
</feature>
<feature type="transmembrane region" description="Helical" evidence="2">
    <location>
        <begin position="52"/>
        <end position="72"/>
    </location>
</feature>
<feature type="transmembrane region" description="Helical" evidence="2">
    <location>
        <begin position="74"/>
        <end position="94"/>
    </location>
</feature>
<feature type="transmembrane region" description="Helical" evidence="2">
    <location>
        <begin position="131"/>
        <end position="151"/>
    </location>
</feature>
<feature type="transmembrane region" description="Helical" evidence="2">
    <location>
        <begin position="179"/>
        <end position="199"/>
    </location>
</feature>
<feature type="transmembrane region" description="Helical" evidence="2">
    <location>
        <begin position="206"/>
        <end position="226"/>
    </location>
</feature>
<feature type="transmembrane region" description="Helical" evidence="2">
    <location>
        <begin position="251"/>
        <end position="271"/>
    </location>
</feature>
<feature type="transmembrane region" description="Helical" evidence="2">
    <location>
        <begin position="272"/>
        <end position="292"/>
    </location>
</feature>
<feature type="transmembrane region" description="Helical" evidence="2">
    <location>
        <begin position="314"/>
        <end position="334"/>
    </location>
</feature>
<feature type="region of interest" description="Disordered" evidence="3">
    <location>
        <begin position="1"/>
        <end position="26"/>
    </location>
</feature>
<feature type="compositionally biased region" description="Basic and acidic residues" evidence="3">
    <location>
        <begin position="11"/>
        <end position="23"/>
    </location>
</feature>
<keyword id="KW-0460">Magnesium</keyword>
<keyword id="KW-0472">Membrane</keyword>
<keyword id="KW-0808">Transferase</keyword>
<keyword id="KW-0812">Transmembrane</keyword>
<keyword id="KW-1133">Transmembrane helix</keyword>
<evidence type="ECO:0000250" key="1">
    <source>
        <dbReference type="UniProtKB" id="P32378"/>
    </source>
</evidence>
<evidence type="ECO:0000255" key="2"/>
<evidence type="ECO:0000256" key="3">
    <source>
        <dbReference type="SAM" id="MobiDB-lite"/>
    </source>
</evidence>
<evidence type="ECO:0000269" key="4">
    <source>
    </source>
</evidence>
<evidence type="ECO:0000269" key="5">
    <source>
    </source>
</evidence>
<evidence type="ECO:0000269" key="6">
    <source>
    </source>
</evidence>
<evidence type="ECO:0000269" key="7">
    <source>
    </source>
</evidence>
<evidence type="ECO:0000269" key="8">
    <source>
    </source>
</evidence>
<evidence type="ECO:0000303" key="9">
    <source>
    </source>
</evidence>
<evidence type="ECO:0000305" key="10"/>
<accession>A0A455R413</accession>
<name>ASCA_ACREG</name>
<reference key="1">
    <citation type="journal article" date="2019" name="Proc. Natl. Acad. Sci. U.S.A.">
        <title>Complete biosynthetic pathways of ascofuranone and ascochlorin in Acremonium egyptiacum.</title>
        <authorList>
            <person name="Araki Y."/>
            <person name="Awakawa T."/>
            <person name="Matsuzaki M."/>
            <person name="Cho R."/>
            <person name="Matsuda Y."/>
            <person name="Hoshino S."/>
            <person name="Shinohara Y."/>
            <person name="Yamamoto M."/>
            <person name="Kido Y."/>
            <person name="Inaoka D.K."/>
            <person name="Nagamune K."/>
            <person name="Ito K."/>
            <person name="Abe I."/>
            <person name="Kita K."/>
        </authorList>
    </citation>
    <scope>NUCLEOTIDE SEQUENCE [GENOMIC DNA]</scope>
    <scope>FUNCTION</scope>
    <scope>CATALYTIC ACTIVITY</scope>
    <scope>INDUCTION</scope>
    <scope>PATHWAY</scope>
    <source>
        <strain>F-1392</strain>
    </source>
</reference>
<reference key="2">
    <citation type="journal article" date="2002" name="Biochim. Biophys. Acta">
        <title>Trypanosome alternative oxidase as a target of chemotherapy.</title>
        <authorList>
            <person name="Nihei C."/>
            <person name="Fukai Y."/>
            <person name="Kita K."/>
        </authorList>
    </citation>
    <scope>BIOTECHNOLOGY</scope>
</reference>
<reference key="3">
    <citation type="journal article" date="2003" name="Parasitol. Int.">
        <title>The efficacy of ascofuranone in a consecutive treatment on Trypanosoma brucei brucei in mice.</title>
        <authorList>
            <person name="Yabu Y."/>
            <person name="Yoshida A."/>
            <person name="Suzuki T."/>
            <person name="Nihei C."/>
            <person name="Kawai K."/>
            <person name="Minagawa N."/>
            <person name="Hosokawa T."/>
            <person name="Nagai K."/>
            <person name="Kita K."/>
            <person name="Ohta N."/>
        </authorList>
    </citation>
    <scope>BIOTECHNOLOGY</scope>
</reference>
<reference key="4">
    <citation type="journal article" date="2010" name="Parasitol. Int.">
        <title>Trypanosome alternative oxidase, a potential therapeutic target for sleeping sickness, is conserved among Trypanosoma brucei subspecies.</title>
        <authorList>
            <person name="Nakamura K."/>
            <person name="Fujioka S."/>
            <person name="Fukumoto S."/>
            <person name="Inoue N."/>
            <person name="Sakamoto K."/>
            <person name="Hirata H."/>
            <person name="Kido Y."/>
            <person name="Yabu Y."/>
            <person name="Suzuki T."/>
            <person name="Watanabe Y."/>
            <person name="Saimoto H."/>
            <person name="Akiyama H."/>
            <person name="Kita K."/>
        </authorList>
    </citation>
    <scope>BIOTECHNOLOGY</scope>
</reference>
<reference key="5">
    <citation type="journal article" date="2022" name="J. Gen. Appl. Microbiol.">
        <title>Heterologous production of ascofuranone and ilicicolin A in Aspergillus sojae.</title>
        <authorList>
            <person name="Araki Y."/>
            <person name="Shinohara Y."/>
            <person name="Hara S."/>
            <person name="Sato A."/>
            <person name="Sakaue R."/>
            <person name="Gomi K."/>
            <person name="Kita K."/>
            <person name="Ito K."/>
        </authorList>
    </citation>
    <scope>FUNCTION</scope>
    <scope>CATALYTIC ACTIVITY</scope>
    <scope>PATHWAY</scope>
</reference>
<gene>
    <name evidence="9" type="primary">ascA</name>
</gene>
<proteinExistence type="evidence at protein level"/>
<protein>
    <recommendedName>
        <fullName evidence="9">Prenytransferase ascA</fullName>
        <ecNumber evidence="7 8">2.5.1.-</ecNumber>
    </recommendedName>
    <alternativeName>
        <fullName evidence="9">Ascofuranone/ascochlorin biosynthesis clusters protein A</fullName>
    </alternativeName>
</protein>
<dbReference type="EC" id="2.5.1.-" evidence="7 8"/>
<dbReference type="EMBL" id="LC406756">
    <property type="protein sequence ID" value="BBF25313.1"/>
    <property type="molecule type" value="Genomic_DNA"/>
</dbReference>
<dbReference type="SMR" id="A0A455R413"/>
<dbReference type="UniPathway" id="UPA00213"/>
<dbReference type="GO" id="GO:0005743">
    <property type="term" value="C:mitochondrial inner membrane"/>
    <property type="evidence" value="ECO:0007669"/>
    <property type="project" value="TreeGrafter"/>
</dbReference>
<dbReference type="GO" id="GO:0008412">
    <property type="term" value="F:4-hydroxybenzoate polyprenyltransferase activity"/>
    <property type="evidence" value="ECO:0007669"/>
    <property type="project" value="TreeGrafter"/>
</dbReference>
<dbReference type="GO" id="GO:0016114">
    <property type="term" value="P:terpenoid biosynthetic process"/>
    <property type="evidence" value="ECO:0007669"/>
    <property type="project" value="UniProtKB-UniPathway"/>
</dbReference>
<dbReference type="GO" id="GO:0006744">
    <property type="term" value="P:ubiquinone biosynthetic process"/>
    <property type="evidence" value="ECO:0007669"/>
    <property type="project" value="TreeGrafter"/>
</dbReference>
<dbReference type="CDD" id="cd13959">
    <property type="entry name" value="PT_UbiA_COQ2"/>
    <property type="match status" value="1"/>
</dbReference>
<dbReference type="FunFam" id="1.10.357.140:FF:000008">
    <property type="entry name" value="4-hydroxybenzoate octaprenyltransferase"/>
    <property type="match status" value="1"/>
</dbReference>
<dbReference type="Gene3D" id="1.10.357.140">
    <property type="entry name" value="UbiA prenyltransferase"/>
    <property type="match status" value="1"/>
</dbReference>
<dbReference type="Gene3D" id="1.20.120.1780">
    <property type="entry name" value="UbiA prenyltransferase"/>
    <property type="match status" value="1"/>
</dbReference>
<dbReference type="InterPro" id="IPR039653">
    <property type="entry name" value="Prenyltransferase"/>
</dbReference>
<dbReference type="InterPro" id="IPR000537">
    <property type="entry name" value="UbiA_prenyltransferase"/>
</dbReference>
<dbReference type="InterPro" id="IPR044878">
    <property type="entry name" value="UbiA_sf"/>
</dbReference>
<dbReference type="PANTHER" id="PTHR11048:SF28">
    <property type="entry name" value="4-HYDROXYBENZOATE POLYPRENYLTRANSFERASE, MITOCHONDRIAL"/>
    <property type="match status" value="1"/>
</dbReference>
<dbReference type="PANTHER" id="PTHR11048">
    <property type="entry name" value="PRENYLTRANSFERASES"/>
    <property type="match status" value="1"/>
</dbReference>
<dbReference type="Pfam" id="PF01040">
    <property type="entry name" value="UbiA"/>
    <property type="match status" value="1"/>
</dbReference>
<comment type="function">
    <text evidence="7 8">Prenytransferase; part of the asc-1 gene cluster that mediates the biosynthesis of both ascochlorin and ascofuranone, a strong inhibitor of cyanide-insensitive alternative oxidases and a promising drug candidate against African trypanosomiasis (PubMed:30952781, PubMed:35418536). The first step in the pathway is performed by the non-reducing polyketide synthase ascC that produces orsellinic acid by condensing acetyl-CoA with 3 malonyl-CoA units (PubMed:30952781, PubMed:35418536). Orsellinic acid is then prenylated by the prenyltransferase ascA to yield ilicicolinic acid B (PubMed:30952781, PubMed:35418536). Ilicicolinic acid B is further reduced to ilicicolin B by the reductase ascB (PubMed:30952781, PubMed:35418536). The halogenase ascD then chlorinates ilicicolin B to produce ilicicolin A which is converted to ilicicolin A epoxide by the cytochrome P450 monooxygenase ascE that catalyzes stereoselective epoxidation of the terminal double bond of the prenyl group (PubMed:30952781, PubMed:35418536). Ilicicolin A epoxide is the last common precursor for the biosynthesis of ascofuranone and ascochlorin (PubMed:30952781, PubMed:35418536). The terpene cyclase ascF produces a monocyclic terpene, and the cyclization reaction is proposed to be initiated by protonation of the terminal epoxide of ilicicolin A epoxide to generate a monocyclic tertiarycation, which is followed by a series of hydride and methyl shifts with abstraction of proton, leading to the formation of the (14S,15R,19R)-trimethylcyclohexanone ring structure of ilicicolin C, which is finally reduced to ascochlorin by the dehydrogenase ascG (PubMed:30952781). On the other hand, ilicicolin A epoxide is hydroxylated by the cytochrome P450 monooxygenase ascH, and the resultant product is cyclized by the terpene cyclase ascI to ascofuranol via protonation-initiated epoxide ring opening, which facilitates the 6-endo-tet cyclization to form the tetrahy-drofuran ring (PubMed:30952781, PubMed:35418536). Finally, ascofuranol is oxidized into ascofuranone by ascJ (PubMed:30952781, PubMed:35418536).</text>
</comment>
<comment type="catalytic activity">
    <reaction evidence="7 8">
        <text>orsellinate + (2E,6E)-farnesyl diphosphate = ilicicolinate B + diphosphate</text>
        <dbReference type="Rhea" id="RHEA:63012"/>
        <dbReference type="ChEBI" id="CHEBI:16162"/>
        <dbReference type="ChEBI" id="CHEBI:33019"/>
        <dbReference type="ChEBI" id="CHEBI:146152"/>
        <dbReference type="ChEBI" id="CHEBI:175763"/>
    </reaction>
    <physiologicalReaction direction="left-to-right" evidence="7 8">
        <dbReference type="Rhea" id="RHEA:63013"/>
    </physiologicalReaction>
</comment>
<comment type="cofactor">
    <cofactor evidence="1">
        <name>Mg(2+)</name>
        <dbReference type="ChEBI" id="CHEBI:18420"/>
    </cofactor>
</comment>
<comment type="pathway">
    <text evidence="7 8">Secondary metabolite biosynthesis; terpenoid biosynthesis.</text>
</comment>
<comment type="subcellular location">
    <subcellularLocation>
        <location evidence="2">Membrane</location>
        <topology evidence="2">Multi-pass membrane protein</topology>
    </subcellularLocation>
</comment>
<comment type="induction">
    <text evidence="7">Expression is induced on AF medium.</text>
</comment>
<comment type="biotechnology">
    <text evidence="4 5 6">Ascofuranone is a specific inhibitor of trypanosome alternative oxidase (TAO), and quickly kills African trypanosomes in vitro and cures infected mice. As an essential factor for trypanosome survival, TAO is a promising drug target due to the absence of alternative oxidases in the mammalian host.</text>
</comment>
<comment type="similarity">
    <text evidence="10">Belongs to the UbiA prenyltransferase family.</text>
</comment>
<organism>
    <name type="scientific">Acremonium egyptiacum</name>
    <name type="common">Oospora egyptiaca</name>
    <dbReference type="NCBI Taxonomy" id="749675"/>
    <lineage>
        <taxon>Eukaryota</taxon>
        <taxon>Fungi</taxon>
        <taxon>Dikarya</taxon>
        <taxon>Ascomycota</taxon>
        <taxon>Pezizomycotina</taxon>
        <taxon>Sordariomycetes</taxon>
        <taxon>Hypocreomycetidae</taxon>
        <taxon>Hypocreales</taxon>
        <taxon>Hypocreales incertae sedis</taxon>
        <taxon>Acremonium</taxon>
    </lineage>
</organism>